<dbReference type="EC" id="1.21.98.4" evidence="1"/>
<dbReference type="EMBL" id="AE015451">
    <property type="protein sequence ID" value="AAN66007.1"/>
    <property type="molecule type" value="Genomic_DNA"/>
</dbReference>
<dbReference type="RefSeq" id="NP_742543.1">
    <property type="nucleotide sequence ID" value="NC_002947.4"/>
</dbReference>
<dbReference type="RefSeq" id="WP_010951727.1">
    <property type="nucleotide sequence ID" value="NC_002947.4"/>
</dbReference>
<dbReference type="SMR" id="Q88QV8"/>
<dbReference type="STRING" id="160488.PP_0376"/>
<dbReference type="PaxDb" id="160488-PP_0376"/>
<dbReference type="GeneID" id="83677653"/>
<dbReference type="KEGG" id="ppu:PP_0376"/>
<dbReference type="PATRIC" id="fig|160488.4.peg.406"/>
<dbReference type="eggNOG" id="COG0535">
    <property type="taxonomic scope" value="Bacteria"/>
</dbReference>
<dbReference type="HOGENOM" id="CLU_009273_4_7_6"/>
<dbReference type="OrthoDB" id="9792276at2"/>
<dbReference type="PhylomeDB" id="Q88QV8"/>
<dbReference type="BioCyc" id="PPUT160488:G1G01-411-MONOMER"/>
<dbReference type="UniPathway" id="UPA00539"/>
<dbReference type="Proteomes" id="UP000000556">
    <property type="component" value="Chromosome"/>
</dbReference>
<dbReference type="GO" id="GO:0051539">
    <property type="term" value="F:4 iron, 4 sulfur cluster binding"/>
    <property type="evidence" value="ECO:0007669"/>
    <property type="project" value="UniProtKB-KW"/>
</dbReference>
<dbReference type="GO" id="GO:0009975">
    <property type="term" value="F:cyclase activity"/>
    <property type="evidence" value="ECO:0007669"/>
    <property type="project" value="UniProtKB-UniRule"/>
</dbReference>
<dbReference type="GO" id="GO:0005506">
    <property type="term" value="F:iron ion binding"/>
    <property type="evidence" value="ECO:0007669"/>
    <property type="project" value="UniProtKB-UniRule"/>
</dbReference>
<dbReference type="GO" id="GO:0016491">
    <property type="term" value="F:oxidoreductase activity"/>
    <property type="evidence" value="ECO:0007669"/>
    <property type="project" value="UniProtKB-KW"/>
</dbReference>
<dbReference type="GO" id="GO:1904047">
    <property type="term" value="F:S-adenosyl-L-methionine binding"/>
    <property type="evidence" value="ECO:0007669"/>
    <property type="project" value="UniProtKB-UniRule"/>
</dbReference>
<dbReference type="GO" id="GO:0018189">
    <property type="term" value="P:pyrroloquinoline quinone biosynthetic process"/>
    <property type="evidence" value="ECO:0007669"/>
    <property type="project" value="UniProtKB-UniRule"/>
</dbReference>
<dbReference type="CDD" id="cd01335">
    <property type="entry name" value="Radical_SAM"/>
    <property type="match status" value="1"/>
</dbReference>
<dbReference type="CDD" id="cd21119">
    <property type="entry name" value="SPASM_PqqE"/>
    <property type="match status" value="1"/>
</dbReference>
<dbReference type="Gene3D" id="3.20.20.70">
    <property type="entry name" value="Aldolase class I"/>
    <property type="match status" value="1"/>
</dbReference>
<dbReference type="HAMAP" id="MF_00660">
    <property type="entry name" value="PqqE"/>
    <property type="match status" value="1"/>
</dbReference>
<dbReference type="InterPro" id="IPR023885">
    <property type="entry name" value="4Fe4S-binding_SPASM_dom"/>
</dbReference>
<dbReference type="InterPro" id="IPR013785">
    <property type="entry name" value="Aldolase_TIM"/>
</dbReference>
<dbReference type="InterPro" id="IPR006638">
    <property type="entry name" value="Elp3/MiaA/NifB-like_rSAM"/>
</dbReference>
<dbReference type="InterPro" id="IPR000385">
    <property type="entry name" value="MoaA_NifB_PqqE_Fe-S-bd_CS"/>
</dbReference>
<dbReference type="InterPro" id="IPR011843">
    <property type="entry name" value="PQQ_synth_PqqE_bac"/>
</dbReference>
<dbReference type="InterPro" id="IPR017200">
    <property type="entry name" value="PqqE-like"/>
</dbReference>
<dbReference type="InterPro" id="IPR050377">
    <property type="entry name" value="Radical_SAM_PqqE_MftC-like"/>
</dbReference>
<dbReference type="InterPro" id="IPR007197">
    <property type="entry name" value="rSAM"/>
</dbReference>
<dbReference type="NCBIfam" id="TIGR02109">
    <property type="entry name" value="PQQ_syn_pqqE"/>
    <property type="match status" value="1"/>
</dbReference>
<dbReference type="NCBIfam" id="TIGR04085">
    <property type="entry name" value="rSAM_more_4Fe4S"/>
    <property type="match status" value="1"/>
</dbReference>
<dbReference type="PANTHER" id="PTHR11228:SF7">
    <property type="entry name" value="PQQA PEPTIDE CYCLASE"/>
    <property type="match status" value="1"/>
</dbReference>
<dbReference type="PANTHER" id="PTHR11228">
    <property type="entry name" value="RADICAL SAM DOMAIN PROTEIN"/>
    <property type="match status" value="1"/>
</dbReference>
<dbReference type="Pfam" id="PF13353">
    <property type="entry name" value="Fer4_12"/>
    <property type="match status" value="1"/>
</dbReference>
<dbReference type="Pfam" id="PF04055">
    <property type="entry name" value="Radical_SAM"/>
    <property type="match status" value="1"/>
</dbReference>
<dbReference type="Pfam" id="PF13186">
    <property type="entry name" value="SPASM"/>
    <property type="match status" value="1"/>
</dbReference>
<dbReference type="PIRSF" id="PIRSF037420">
    <property type="entry name" value="PQQ_syn_pqqE"/>
    <property type="match status" value="1"/>
</dbReference>
<dbReference type="SFLD" id="SFLDF00280">
    <property type="entry name" value="coenzyme_PQQ_synthesis_protein"/>
    <property type="match status" value="1"/>
</dbReference>
<dbReference type="SFLD" id="SFLDS00029">
    <property type="entry name" value="Radical_SAM"/>
    <property type="match status" value="1"/>
</dbReference>
<dbReference type="SMART" id="SM00729">
    <property type="entry name" value="Elp3"/>
    <property type="match status" value="1"/>
</dbReference>
<dbReference type="SUPFAM" id="SSF102114">
    <property type="entry name" value="Radical SAM enzymes"/>
    <property type="match status" value="1"/>
</dbReference>
<dbReference type="PROSITE" id="PS01305">
    <property type="entry name" value="MOAA_NIFB_PQQE"/>
    <property type="match status" value="1"/>
</dbReference>
<dbReference type="PROSITE" id="PS51918">
    <property type="entry name" value="RADICAL_SAM"/>
    <property type="match status" value="1"/>
</dbReference>
<protein>
    <recommendedName>
        <fullName evidence="1">PqqA peptide cyclase</fullName>
        <ecNumber evidence="1">1.21.98.4</ecNumber>
    </recommendedName>
    <alternativeName>
        <fullName evidence="1">Coenzyme PQQ synthesis protein E</fullName>
    </alternativeName>
    <alternativeName>
        <fullName evidence="1">Pyrroloquinoline quinone biosynthesis protein E</fullName>
    </alternativeName>
</protein>
<comment type="function">
    <text evidence="1">Catalyzes the cross-linking of a glutamate residue and a tyrosine residue in the PqqA protein as part of the biosynthesis of pyrroloquinoline quinone (PQQ).</text>
</comment>
<comment type="catalytic activity">
    <reaction evidence="1">
        <text>[PQQ precursor protein] + S-adenosyl-L-methionine = E-Y cross-linked-[PQQ precursor protein] + 5'-deoxyadenosine + L-methionine + H(+)</text>
        <dbReference type="Rhea" id="RHEA:56836"/>
        <dbReference type="Rhea" id="RHEA-COMP:14800"/>
        <dbReference type="Rhea" id="RHEA-COMP:14801"/>
        <dbReference type="ChEBI" id="CHEBI:15378"/>
        <dbReference type="ChEBI" id="CHEBI:17319"/>
        <dbReference type="ChEBI" id="CHEBI:57844"/>
        <dbReference type="ChEBI" id="CHEBI:59789"/>
        <dbReference type="ChEBI" id="CHEBI:141026"/>
        <dbReference type="ChEBI" id="CHEBI:141027"/>
        <dbReference type="EC" id="1.21.98.4"/>
    </reaction>
</comment>
<comment type="cofactor">
    <cofactor evidence="1">
        <name>[4Fe-4S] cluster</name>
        <dbReference type="ChEBI" id="CHEBI:49883"/>
    </cofactor>
    <text evidence="1">Binds 1 [4Fe-4S] cluster. The cluster is coordinated with 3 cysteines and an exchangeable S-adenosyl-L-methionine.</text>
</comment>
<comment type="pathway">
    <text evidence="1">Cofactor biosynthesis; pyrroloquinoline quinone biosynthesis.</text>
</comment>
<comment type="subunit">
    <text evidence="1">Interacts with PqqD. The interaction is necessary for activity of PqqE.</text>
</comment>
<comment type="similarity">
    <text evidence="1">Belongs to the radical SAM superfamily. PqqE family.</text>
</comment>
<organism>
    <name type="scientific">Pseudomonas putida (strain ATCC 47054 / DSM 6125 / CFBP 8728 / NCIMB 11950 / KT2440)</name>
    <dbReference type="NCBI Taxonomy" id="160488"/>
    <lineage>
        <taxon>Bacteria</taxon>
        <taxon>Pseudomonadati</taxon>
        <taxon>Pseudomonadota</taxon>
        <taxon>Gammaproteobacteria</taxon>
        <taxon>Pseudomonadales</taxon>
        <taxon>Pseudomonadaceae</taxon>
        <taxon>Pseudomonas</taxon>
    </lineage>
</organism>
<sequence>MPPTPEVGLPLWLLAELTYRCPLQCPYCSNPLDFAAQGQELSTEQWFKVMAEAREMGAAQIGFSGGEPLVRQDLAQLIAEARRLGYYTNLITSGIGLTEARIADFKKAGLDHIQISFQASDEQVNNLLAGSKKAFAQKLEMARAVKAHGYPMVLNFVTHRHNIDKIDRIIELCIALEADFVELATCQFYGWAHLNRLGLLPTRAQLERAERITNEYRDKLKAEGNPCKLIFVTPDYYEERPKACMNGWGNLFLTITPDGTALPCHGARQLPVQFPNVRDHDLHHIWYESFGFNRFRGYEWMREPCRSCDEKEKDFGGCRCQAFMLTGDASNADPVCAKSTDHGIILKAREEAETAQLAIEQMTFRNDRNSRVIARG</sequence>
<feature type="chain" id="PRO_0000219945" description="PqqA peptide cyclase">
    <location>
        <begin position="1"/>
        <end position="376"/>
    </location>
</feature>
<feature type="domain" description="Radical SAM core" evidence="2">
    <location>
        <begin position="7"/>
        <end position="222"/>
    </location>
</feature>
<feature type="binding site" evidence="1">
    <location>
        <position position="21"/>
    </location>
    <ligand>
        <name>[4Fe-4S] cluster</name>
        <dbReference type="ChEBI" id="CHEBI:49883"/>
        <note>4Fe-4S-S-AdoMet</note>
    </ligand>
</feature>
<feature type="binding site" evidence="1">
    <location>
        <position position="25"/>
    </location>
    <ligand>
        <name>[4Fe-4S] cluster</name>
        <dbReference type="ChEBI" id="CHEBI:49883"/>
        <note>4Fe-4S-S-AdoMet</note>
    </ligand>
</feature>
<feature type="binding site" evidence="1">
    <location>
        <position position="28"/>
    </location>
    <ligand>
        <name>[4Fe-4S] cluster</name>
        <dbReference type="ChEBI" id="CHEBI:49883"/>
        <note>4Fe-4S-S-AdoMet</note>
    </ligand>
</feature>
<proteinExistence type="inferred from homology"/>
<keyword id="KW-0004">4Fe-4S</keyword>
<keyword id="KW-0408">Iron</keyword>
<keyword id="KW-0411">Iron-sulfur</keyword>
<keyword id="KW-0479">Metal-binding</keyword>
<keyword id="KW-0560">Oxidoreductase</keyword>
<keyword id="KW-0884">PQQ biosynthesis</keyword>
<keyword id="KW-1185">Reference proteome</keyword>
<keyword id="KW-0949">S-adenosyl-L-methionine</keyword>
<accession>Q88QV8</accession>
<gene>
    <name evidence="1" type="primary">pqqE</name>
    <name type="ordered locus">PP_0376</name>
</gene>
<reference key="1">
    <citation type="journal article" date="2002" name="Environ. Microbiol.">
        <title>Complete genome sequence and comparative analysis of the metabolically versatile Pseudomonas putida KT2440.</title>
        <authorList>
            <person name="Nelson K.E."/>
            <person name="Weinel C."/>
            <person name="Paulsen I.T."/>
            <person name="Dodson R.J."/>
            <person name="Hilbert H."/>
            <person name="Martins dos Santos V.A.P."/>
            <person name="Fouts D.E."/>
            <person name="Gill S.R."/>
            <person name="Pop M."/>
            <person name="Holmes M."/>
            <person name="Brinkac L.M."/>
            <person name="Beanan M.J."/>
            <person name="DeBoy R.T."/>
            <person name="Daugherty S.C."/>
            <person name="Kolonay J.F."/>
            <person name="Madupu R."/>
            <person name="Nelson W.C."/>
            <person name="White O."/>
            <person name="Peterson J.D."/>
            <person name="Khouri H.M."/>
            <person name="Hance I."/>
            <person name="Chris Lee P."/>
            <person name="Holtzapple E.K."/>
            <person name="Scanlan D."/>
            <person name="Tran K."/>
            <person name="Moazzez A."/>
            <person name="Utterback T.R."/>
            <person name="Rizzo M."/>
            <person name="Lee K."/>
            <person name="Kosack D."/>
            <person name="Moestl D."/>
            <person name="Wedler H."/>
            <person name="Lauber J."/>
            <person name="Stjepandic D."/>
            <person name="Hoheisel J."/>
            <person name="Straetz M."/>
            <person name="Heim S."/>
            <person name="Kiewitz C."/>
            <person name="Eisen J.A."/>
            <person name="Timmis K.N."/>
            <person name="Duesterhoeft A."/>
            <person name="Tuemmler B."/>
            <person name="Fraser C.M."/>
        </authorList>
    </citation>
    <scope>NUCLEOTIDE SEQUENCE [LARGE SCALE GENOMIC DNA]</scope>
    <source>
        <strain>ATCC 47054 / DSM 6125 / CFBP 8728 / NCIMB 11950 / KT2440</strain>
    </source>
</reference>
<name>PQQE_PSEPK</name>
<evidence type="ECO:0000255" key="1">
    <source>
        <dbReference type="HAMAP-Rule" id="MF_00660"/>
    </source>
</evidence>
<evidence type="ECO:0000255" key="2">
    <source>
        <dbReference type="PROSITE-ProRule" id="PRU01266"/>
    </source>
</evidence>